<name>CCME_POLAQ</name>
<sequence length="144" mass="15333">MKPRHKRALMIVAALAVIGIAALLILNALNSNIALYVTPSDVVAGKAPQGQAFRIGGLVKEGSLKRDGLTVHFVITDLVKDIPVSYTGILPDLFKEGKGAVIQGNLNPQGEFIASEVLAKHDENYMPPEAKHALEQAQKNGSAK</sequence>
<evidence type="ECO:0000255" key="1">
    <source>
        <dbReference type="HAMAP-Rule" id="MF_01959"/>
    </source>
</evidence>
<protein>
    <recommendedName>
        <fullName evidence="1">Cytochrome c-type biogenesis protein CcmE</fullName>
    </recommendedName>
    <alternativeName>
        <fullName evidence="1">Cytochrome c maturation protein E</fullName>
    </alternativeName>
    <alternativeName>
        <fullName evidence="1">Heme chaperone CcmE</fullName>
    </alternativeName>
</protein>
<dbReference type="EMBL" id="CP000655">
    <property type="protein sequence ID" value="ABP34728.1"/>
    <property type="molecule type" value="Genomic_DNA"/>
</dbReference>
<dbReference type="RefSeq" id="WP_011903351.1">
    <property type="nucleotide sequence ID" value="NC_009379.1"/>
</dbReference>
<dbReference type="SMR" id="A4SZ14"/>
<dbReference type="GeneID" id="31481905"/>
<dbReference type="KEGG" id="pnu:Pnuc_1514"/>
<dbReference type="eggNOG" id="COG2332">
    <property type="taxonomic scope" value="Bacteria"/>
</dbReference>
<dbReference type="HOGENOM" id="CLU_079503_1_1_4"/>
<dbReference type="Proteomes" id="UP000000231">
    <property type="component" value="Chromosome"/>
</dbReference>
<dbReference type="GO" id="GO:0005886">
    <property type="term" value="C:plasma membrane"/>
    <property type="evidence" value="ECO:0007669"/>
    <property type="project" value="UniProtKB-SubCell"/>
</dbReference>
<dbReference type="GO" id="GO:0020037">
    <property type="term" value="F:heme binding"/>
    <property type="evidence" value="ECO:0007669"/>
    <property type="project" value="InterPro"/>
</dbReference>
<dbReference type="GO" id="GO:0046872">
    <property type="term" value="F:metal ion binding"/>
    <property type="evidence" value="ECO:0007669"/>
    <property type="project" value="UniProtKB-KW"/>
</dbReference>
<dbReference type="GO" id="GO:0017004">
    <property type="term" value="P:cytochrome complex assembly"/>
    <property type="evidence" value="ECO:0007669"/>
    <property type="project" value="UniProtKB-KW"/>
</dbReference>
<dbReference type="FunFam" id="2.40.50.140:FF:000104">
    <property type="entry name" value="Cytochrome c-type biogenesis protein CcmE"/>
    <property type="match status" value="1"/>
</dbReference>
<dbReference type="Gene3D" id="2.40.50.140">
    <property type="entry name" value="Nucleic acid-binding proteins"/>
    <property type="match status" value="1"/>
</dbReference>
<dbReference type="HAMAP" id="MF_01959">
    <property type="entry name" value="CcmE"/>
    <property type="match status" value="1"/>
</dbReference>
<dbReference type="InterPro" id="IPR004329">
    <property type="entry name" value="CcmE"/>
</dbReference>
<dbReference type="InterPro" id="IPR036127">
    <property type="entry name" value="CcmE-like_sf"/>
</dbReference>
<dbReference type="InterPro" id="IPR012340">
    <property type="entry name" value="NA-bd_OB-fold"/>
</dbReference>
<dbReference type="NCBIfam" id="NF009727">
    <property type="entry name" value="PRK13254.1-1"/>
    <property type="match status" value="1"/>
</dbReference>
<dbReference type="NCBIfam" id="NF009729">
    <property type="entry name" value="PRK13254.1-3"/>
    <property type="match status" value="1"/>
</dbReference>
<dbReference type="NCBIfam" id="NF009731">
    <property type="entry name" value="PRK13254.1-5"/>
    <property type="match status" value="1"/>
</dbReference>
<dbReference type="PANTHER" id="PTHR34128">
    <property type="entry name" value="CYTOCHROME C-TYPE BIOGENESIS PROTEIN CCME HOMOLOG, MITOCHONDRIAL"/>
    <property type="match status" value="1"/>
</dbReference>
<dbReference type="PANTHER" id="PTHR34128:SF2">
    <property type="entry name" value="CYTOCHROME C-TYPE BIOGENESIS PROTEIN CCME HOMOLOG, MITOCHONDRIAL"/>
    <property type="match status" value="1"/>
</dbReference>
<dbReference type="Pfam" id="PF03100">
    <property type="entry name" value="CcmE"/>
    <property type="match status" value="1"/>
</dbReference>
<dbReference type="SUPFAM" id="SSF82093">
    <property type="entry name" value="Heme chaperone CcmE"/>
    <property type="match status" value="1"/>
</dbReference>
<accession>A4SZ14</accession>
<proteinExistence type="inferred from homology"/>
<organism>
    <name type="scientific">Polynucleobacter asymbioticus (strain DSM 18221 / CIP 109841 / QLW-P1DMWA-1)</name>
    <name type="common">Polynucleobacter necessarius subsp. asymbioticus</name>
    <dbReference type="NCBI Taxonomy" id="312153"/>
    <lineage>
        <taxon>Bacteria</taxon>
        <taxon>Pseudomonadati</taxon>
        <taxon>Pseudomonadota</taxon>
        <taxon>Betaproteobacteria</taxon>
        <taxon>Burkholderiales</taxon>
        <taxon>Burkholderiaceae</taxon>
        <taxon>Polynucleobacter</taxon>
    </lineage>
</organism>
<gene>
    <name evidence="1" type="primary">ccmE</name>
    <name evidence="1" type="synonym">cycJ</name>
    <name type="ordered locus">Pnuc_1514</name>
</gene>
<reference key="1">
    <citation type="journal article" date="2012" name="Stand. Genomic Sci.">
        <title>Complete genome sequence of Polynucleobacter necessarius subsp. asymbioticus type strain (QLW-P1DMWA-1(T)).</title>
        <authorList>
            <person name="Meincke L."/>
            <person name="Copeland A."/>
            <person name="Lapidus A."/>
            <person name="Lucas S."/>
            <person name="Berry K.W."/>
            <person name="Del Rio T.G."/>
            <person name="Hammon N."/>
            <person name="Dalin E."/>
            <person name="Tice H."/>
            <person name="Pitluck S."/>
            <person name="Richardson P."/>
            <person name="Bruce D."/>
            <person name="Goodwin L."/>
            <person name="Han C."/>
            <person name="Tapia R."/>
            <person name="Detter J.C."/>
            <person name="Schmutz J."/>
            <person name="Brettin T."/>
            <person name="Larimer F."/>
            <person name="Land M."/>
            <person name="Hauser L."/>
            <person name="Kyrpides N.C."/>
            <person name="Ivanova N."/>
            <person name="Goker M."/>
            <person name="Woyke T."/>
            <person name="Wu Q.L."/>
            <person name="Pockl M."/>
            <person name="Hahn M.W."/>
            <person name="Klenk H.P."/>
        </authorList>
    </citation>
    <scope>NUCLEOTIDE SEQUENCE [LARGE SCALE GENOMIC DNA]</scope>
    <source>
        <strain>DSM 18221 / CIP 109841 / QLW-P1DMWA-1</strain>
    </source>
</reference>
<keyword id="KW-1003">Cell membrane</keyword>
<keyword id="KW-0201">Cytochrome c-type biogenesis</keyword>
<keyword id="KW-0349">Heme</keyword>
<keyword id="KW-0408">Iron</keyword>
<keyword id="KW-0472">Membrane</keyword>
<keyword id="KW-0479">Metal-binding</keyword>
<keyword id="KW-1185">Reference proteome</keyword>
<keyword id="KW-0735">Signal-anchor</keyword>
<keyword id="KW-0812">Transmembrane</keyword>
<keyword id="KW-1133">Transmembrane helix</keyword>
<feature type="chain" id="PRO_1000088528" description="Cytochrome c-type biogenesis protein CcmE">
    <location>
        <begin position="1"/>
        <end position="144"/>
    </location>
</feature>
<feature type="topological domain" description="Cytoplasmic" evidence="1">
    <location>
        <begin position="1"/>
        <end position="7"/>
    </location>
</feature>
<feature type="transmembrane region" description="Helical; Signal-anchor for type II membrane protein" evidence="1">
    <location>
        <begin position="8"/>
        <end position="28"/>
    </location>
</feature>
<feature type="topological domain" description="Extracellular" evidence="1">
    <location>
        <begin position="29"/>
        <end position="144"/>
    </location>
</feature>
<feature type="binding site" description="covalent" evidence="1">
    <location>
        <position position="121"/>
    </location>
    <ligand>
        <name>heme</name>
        <dbReference type="ChEBI" id="CHEBI:30413"/>
    </ligand>
</feature>
<feature type="binding site" description="axial binding residue" evidence="1">
    <location>
        <position position="125"/>
    </location>
    <ligand>
        <name>heme</name>
        <dbReference type="ChEBI" id="CHEBI:30413"/>
    </ligand>
    <ligandPart>
        <name>Fe</name>
        <dbReference type="ChEBI" id="CHEBI:18248"/>
    </ligandPart>
</feature>
<comment type="function">
    <text evidence="1">Heme chaperone required for the biogenesis of c-type cytochromes. Transiently binds heme delivered by CcmC and transfers the heme to apo-cytochromes in a process facilitated by CcmF and CcmH.</text>
</comment>
<comment type="subcellular location">
    <subcellularLocation>
        <location evidence="1">Cell membrane</location>
        <topology evidence="1">Single-pass type II membrane protein</topology>
    </subcellularLocation>
</comment>
<comment type="similarity">
    <text evidence="1">Belongs to the CcmE/CycJ family.</text>
</comment>